<keyword id="KW-0274">FAD</keyword>
<keyword id="KW-0285">Flavoprotein</keyword>
<keyword id="KW-0560">Oxidoreductase</keyword>
<keyword id="KW-1185">Reference proteome</keyword>
<proteinExistence type="inferred from homology"/>
<comment type="function">
    <text evidence="1">Oxidative deamination of D-amino acids.</text>
</comment>
<comment type="catalytic activity">
    <reaction evidence="1">
        <text>a D-alpha-amino acid + A + H2O = a 2-oxocarboxylate + AH2 + NH4(+)</text>
        <dbReference type="Rhea" id="RHEA:18125"/>
        <dbReference type="ChEBI" id="CHEBI:13193"/>
        <dbReference type="ChEBI" id="CHEBI:15377"/>
        <dbReference type="ChEBI" id="CHEBI:17499"/>
        <dbReference type="ChEBI" id="CHEBI:28938"/>
        <dbReference type="ChEBI" id="CHEBI:35179"/>
        <dbReference type="ChEBI" id="CHEBI:59871"/>
    </reaction>
</comment>
<comment type="cofactor">
    <cofactor evidence="1">
        <name>FAD</name>
        <dbReference type="ChEBI" id="CHEBI:57692"/>
    </cofactor>
</comment>
<comment type="pathway">
    <text>Amino-acid degradation; D-alanine degradation; NH(3) and pyruvate from D-alanine: step 1/1.</text>
</comment>
<comment type="similarity">
    <text evidence="1">Belongs to the DadA oxidoreductase family.</text>
</comment>
<gene>
    <name evidence="1" type="primary">dadA</name>
    <name type="ordered locus">ESA_01469</name>
</gene>
<accession>A7MKD3</accession>
<evidence type="ECO:0000255" key="1">
    <source>
        <dbReference type="HAMAP-Rule" id="MF_01202"/>
    </source>
</evidence>
<sequence length="432" mass="47402">MHVVVLGSGVVGVASAWYLRQAGHEVTVIDREPGPALETSAANAGQISPGYAAPWAAPGVPLKAIKWMFQRHAPLAISLDGTHFQLKWMWQMLRNCDTRHYMQNKGRMVRLAEYSRDCLKALRESTGIQYEGRQGGTLQLFRTEQQYENASRDIAVLESEGVPFRLLKAAELAQVEPALADVAHKLTGGLQLPNDETGDCQLFTTRLAQMAEAAGVVFRYNTPVDRLLSEGQRIYGVKCGDEVIKADGYVMAFGSYSTAMLKGIVDIPVYPLKGYSLTIPIADESGAPVSTVLDETYKIAITRFDNRIRVGGMAEIVGFNTELLKPRQETLEMVVRDLYPRGGHIEQAKFWTGLRPMTPDGTPVVGRTEFKNLWLNTGHGTLGWTMACGSGQLLSDIISGRTPAIPFEDLSVARYAPGFTPSSSHRLHGAHP</sequence>
<name>DADA_CROS8</name>
<organism>
    <name type="scientific">Cronobacter sakazakii (strain ATCC BAA-894)</name>
    <name type="common">Enterobacter sakazakii</name>
    <dbReference type="NCBI Taxonomy" id="290339"/>
    <lineage>
        <taxon>Bacteria</taxon>
        <taxon>Pseudomonadati</taxon>
        <taxon>Pseudomonadota</taxon>
        <taxon>Gammaproteobacteria</taxon>
        <taxon>Enterobacterales</taxon>
        <taxon>Enterobacteriaceae</taxon>
        <taxon>Cronobacter</taxon>
    </lineage>
</organism>
<dbReference type="EC" id="1.4.99.-" evidence="1"/>
<dbReference type="EMBL" id="CP000783">
    <property type="protein sequence ID" value="ABU76727.1"/>
    <property type="molecule type" value="Genomic_DNA"/>
</dbReference>
<dbReference type="RefSeq" id="WP_012124512.1">
    <property type="nucleotide sequence ID" value="NC_009778.1"/>
</dbReference>
<dbReference type="SMR" id="A7MKD3"/>
<dbReference type="KEGG" id="esa:ESA_01469"/>
<dbReference type="PATRIC" id="fig|290339.8.peg.1302"/>
<dbReference type="HOGENOM" id="CLU_007884_9_2_6"/>
<dbReference type="UniPathway" id="UPA00043">
    <property type="reaction ID" value="UER00498"/>
</dbReference>
<dbReference type="Proteomes" id="UP000000260">
    <property type="component" value="Chromosome"/>
</dbReference>
<dbReference type="GO" id="GO:0005737">
    <property type="term" value="C:cytoplasm"/>
    <property type="evidence" value="ECO:0007669"/>
    <property type="project" value="TreeGrafter"/>
</dbReference>
<dbReference type="GO" id="GO:0005886">
    <property type="term" value="C:plasma membrane"/>
    <property type="evidence" value="ECO:0007669"/>
    <property type="project" value="TreeGrafter"/>
</dbReference>
<dbReference type="GO" id="GO:0008718">
    <property type="term" value="F:D-amino-acid dehydrogenase activity"/>
    <property type="evidence" value="ECO:0007669"/>
    <property type="project" value="UniProtKB-UniRule"/>
</dbReference>
<dbReference type="GO" id="GO:0055130">
    <property type="term" value="P:D-alanine catabolic process"/>
    <property type="evidence" value="ECO:0007669"/>
    <property type="project" value="UniProtKB-UniPathway"/>
</dbReference>
<dbReference type="FunFam" id="3.50.50.60:FF:000020">
    <property type="entry name" value="D-amino acid dehydrogenase"/>
    <property type="match status" value="1"/>
</dbReference>
<dbReference type="Gene3D" id="3.30.9.10">
    <property type="entry name" value="D-Amino Acid Oxidase, subunit A, domain 2"/>
    <property type="match status" value="1"/>
</dbReference>
<dbReference type="Gene3D" id="3.50.50.60">
    <property type="entry name" value="FAD/NAD(P)-binding domain"/>
    <property type="match status" value="2"/>
</dbReference>
<dbReference type="HAMAP" id="MF_01202">
    <property type="entry name" value="DadA"/>
    <property type="match status" value="1"/>
</dbReference>
<dbReference type="InterPro" id="IPR023080">
    <property type="entry name" value="DadA"/>
</dbReference>
<dbReference type="InterPro" id="IPR006076">
    <property type="entry name" value="FAD-dep_OxRdtase"/>
</dbReference>
<dbReference type="InterPro" id="IPR036188">
    <property type="entry name" value="FAD/NAD-bd_sf"/>
</dbReference>
<dbReference type="NCBIfam" id="NF001933">
    <property type="entry name" value="PRK00711.1"/>
    <property type="match status" value="1"/>
</dbReference>
<dbReference type="PANTHER" id="PTHR13847:SF280">
    <property type="entry name" value="D-AMINO ACID DEHYDROGENASE"/>
    <property type="match status" value="1"/>
</dbReference>
<dbReference type="PANTHER" id="PTHR13847">
    <property type="entry name" value="SARCOSINE DEHYDROGENASE-RELATED"/>
    <property type="match status" value="1"/>
</dbReference>
<dbReference type="Pfam" id="PF01266">
    <property type="entry name" value="DAO"/>
    <property type="match status" value="1"/>
</dbReference>
<dbReference type="SUPFAM" id="SSF54373">
    <property type="entry name" value="FAD-linked reductases, C-terminal domain"/>
    <property type="match status" value="1"/>
</dbReference>
<dbReference type="SUPFAM" id="SSF51905">
    <property type="entry name" value="FAD/NAD(P)-binding domain"/>
    <property type="match status" value="1"/>
</dbReference>
<reference key="1">
    <citation type="journal article" date="2010" name="PLoS ONE">
        <title>Genome sequence of Cronobacter sakazakii BAA-894 and comparative genomic hybridization analysis with other Cronobacter species.</title>
        <authorList>
            <person name="Kucerova E."/>
            <person name="Clifton S.W."/>
            <person name="Xia X.Q."/>
            <person name="Long F."/>
            <person name="Porwollik S."/>
            <person name="Fulton L."/>
            <person name="Fronick C."/>
            <person name="Minx P."/>
            <person name="Kyung K."/>
            <person name="Warren W."/>
            <person name="Fulton R."/>
            <person name="Feng D."/>
            <person name="Wollam A."/>
            <person name="Shah N."/>
            <person name="Bhonagiri V."/>
            <person name="Nash W.E."/>
            <person name="Hallsworth-Pepin K."/>
            <person name="Wilson R.K."/>
            <person name="McClelland M."/>
            <person name="Forsythe S.J."/>
        </authorList>
    </citation>
    <scope>NUCLEOTIDE SEQUENCE [LARGE SCALE GENOMIC DNA]</scope>
    <source>
        <strain>ATCC BAA-894</strain>
    </source>
</reference>
<feature type="chain" id="PRO_1000066094" description="D-amino acid dehydrogenase">
    <location>
        <begin position="1"/>
        <end position="432"/>
    </location>
</feature>
<feature type="binding site" evidence="1">
    <location>
        <begin position="3"/>
        <end position="17"/>
    </location>
    <ligand>
        <name>FAD</name>
        <dbReference type="ChEBI" id="CHEBI:57692"/>
    </ligand>
</feature>
<protein>
    <recommendedName>
        <fullName evidence="1">D-amino acid dehydrogenase</fullName>
        <ecNumber evidence="1">1.4.99.-</ecNumber>
    </recommendedName>
</protein>